<keyword id="KW-0687">Ribonucleoprotein</keyword>
<keyword id="KW-0689">Ribosomal protein</keyword>
<keyword id="KW-0694">RNA-binding</keyword>
<keyword id="KW-0699">rRNA-binding</keyword>
<sequence length="132" mass="14831">MTMTDPIADMLTRVRNANMVRHEKLELPASNIKKEIAEILKSEGFIKNVEYVEDDKQGVLRLFLKYGQNDERVITGLKRISKPGLRVYAKASEMPKVLNGLGIALVSTSEGVITDKEARKRNVGGEIIAYVW</sequence>
<feature type="chain" id="PRO_0000126485" description="Small ribosomal subunit protein uS8">
    <location>
        <begin position="1"/>
        <end position="132"/>
    </location>
</feature>
<comment type="function">
    <text evidence="1">One of the primary rRNA binding proteins, it binds directly to 16S rRNA central domain where it helps coordinate assembly of the platform of the 30S subunit.</text>
</comment>
<comment type="subunit">
    <text evidence="1">Part of the 30S ribosomal subunit. Contacts proteins S5 and S12.</text>
</comment>
<comment type="similarity">
    <text evidence="1">Belongs to the universal ribosomal protein uS8 family.</text>
</comment>
<dbReference type="EMBL" id="BA000018">
    <property type="protein sequence ID" value="BAB43328.1"/>
    <property type="molecule type" value="Genomic_DNA"/>
</dbReference>
<dbReference type="PIR" id="G90020">
    <property type="entry name" value="G90020"/>
</dbReference>
<dbReference type="RefSeq" id="WP_000178881.1">
    <property type="nucleotide sequence ID" value="NC_002745.2"/>
</dbReference>
<dbReference type="SMR" id="P66630"/>
<dbReference type="EnsemblBacteria" id="BAB43328">
    <property type="protein sequence ID" value="BAB43328"/>
    <property type="gene ID" value="BAB43328"/>
</dbReference>
<dbReference type="GeneID" id="98346548"/>
<dbReference type="KEGG" id="sau:SA2034"/>
<dbReference type="HOGENOM" id="CLU_098428_0_2_9"/>
<dbReference type="GO" id="GO:1990904">
    <property type="term" value="C:ribonucleoprotein complex"/>
    <property type="evidence" value="ECO:0007669"/>
    <property type="project" value="UniProtKB-KW"/>
</dbReference>
<dbReference type="GO" id="GO:0005840">
    <property type="term" value="C:ribosome"/>
    <property type="evidence" value="ECO:0007669"/>
    <property type="project" value="UniProtKB-KW"/>
</dbReference>
<dbReference type="GO" id="GO:0019843">
    <property type="term" value="F:rRNA binding"/>
    <property type="evidence" value="ECO:0007669"/>
    <property type="project" value="UniProtKB-UniRule"/>
</dbReference>
<dbReference type="GO" id="GO:0003735">
    <property type="term" value="F:structural constituent of ribosome"/>
    <property type="evidence" value="ECO:0007669"/>
    <property type="project" value="InterPro"/>
</dbReference>
<dbReference type="GO" id="GO:0006412">
    <property type="term" value="P:translation"/>
    <property type="evidence" value="ECO:0007669"/>
    <property type="project" value="UniProtKB-UniRule"/>
</dbReference>
<dbReference type="FunFam" id="3.30.1370.30:FF:000002">
    <property type="entry name" value="30S ribosomal protein S8"/>
    <property type="match status" value="1"/>
</dbReference>
<dbReference type="FunFam" id="3.30.1490.10:FF:000001">
    <property type="entry name" value="30S ribosomal protein S8"/>
    <property type="match status" value="1"/>
</dbReference>
<dbReference type="Gene3D" id="3.30.1370.30">
    <property type="match status" value="1"/>
</dbReference>
<dbReference type="Gene3D" id="3.30.1490.10">
    <property type="match status" value="1"/>
</dbReference>
<dbReference type="HAMAP" id="MF_01302_B">
    <property type="entry name" value="Ribosomal_uS8_B"/>
    <property type="match status" value="1"/>
</dbReference>
<dbReference type="InterPro" id="IPR000630">
    <property type="entry name" value="Ribosomal_uS8"/>
</dbReference>
<dbReference type="InterPro" id="IPR047863">
    <property type="entry name" value="Ribosomal_uS8_CS"/>
</dbReference>
<dbReference type="InterPro" id="IPR035987">
    <property type="entry name" value="Ribosomal_uS8_sf"/>
</dbReference>
<dbReference type="NCBIfam" id="NF001109">
    <property type="entry name" value="PRK00136.1"/>
    <property type="match status" value="1"/>
</dbReference>
<dbReference type="PANTHER" id="PTHR11758">
    <property type="entry name" value="40S RIBOSOMAL PROTEIN S15A"/>
    <property type="match status" value="1"/>
</dbReference>
<dbReference type="Pfam" id="PF00410">
    <property type="entry name" value="Ribosomal_S8"/>
    <property type="match status" value="1"/>
</dbReference>
<dbReference type="SUPFAM" id="SSF56047">
    <property type="entry name" value="Ribosomal protein S8"/>
    <property type="match status" value="1"/>
</dbReference>
<dbReference type="PROSITE" id="PS00053">
    <property type="entry name" value="RIBOSOMAL_S8"/>
    <property type="match status" value="1"/>
</dbReference>
<gene>
    <name evidence="1" type="primary">rpsH</name>
    <name type="ordered locus">SA2034</name>
</gene>
<reference key="1">
    <citation type="journal article" date="2001" name="Lancet">
        <title>Whole genome sequencing of meticillin-resistant Staphylococcus aureus.</title>
        <authorList>
            <person name="Kuroda M."/>
            <person name="Ohta T."/>
            <person name="Uchiyama I."/>
            <person name="Baba T."/>
            <person name="Yuzawa H."/>
            <person name="Kobayashi I."/>
            <person name="Cui L."/>
            <person name="Oguchi A."/>
            <person name="Aoki K."/>
            <person name="Nagai Y."/>
            <person name="Lian J.-Q."/>
            <person name="Ito T."/>
            <person name="Kanamori M."/>
            <person name="Matsumaru H."/>
            <person name="Maruyama A."/>
            <person name="Murakami H."/>
            <person name="Hosoyama A."/>
            <person name="Mizutani-Ui Y."/>
            <person name="Takahashi N.K."/>
            <person name="Sawano T."/>
            <person name="Inoue R."/>
            <person name="Kaito C."/>
            <person name="Sekimizu K."/>
            <person name="Hirakawa H."/>
            <person name="Kuhara S."/>
            <person name="Goto S."/>
            <person name="Yabuzaki J."/>
            <person name="Kanehisa M."/>
            <person name="Yamashita A."/>
            <person name="Oshima K."/>
            <person name="Furuya K."/>
            <person name="Yoshino C."/>
            <person name="Shiba T."/>
            <person name="Hattori M."/>
            <person name="Ogasawara N."/>
            <person name="Hayashi H."/>
            <person name="Hiramatsu K."/>
        </authorList>
    </citation>
    <scope>NUCLEOTIDE SEQUENCE [LARGE SCALE GENOMIC DNA]</scope>
    <source>
        <strain>N315</strain>
    </source>
</reference>
<reference key="2">
    <citation type="submission" date="2007-10" db="UniProtKB">
        <title>Shotgun proteomic analysis of total and membrane protein extracts of S. aureus strain N315.</title>
        <authorList>
            <person name="Vaezzadeh A.R."/>
            <person name="Deshusses J."/>
            <person name="Lescuyer P."/>
            <person name="Hochstrasser D.F."/>
        </authorList>
    </citation>
    <scope>IDENTIFICATION BY MASS SPECTROMETRY [LARGE SCALE ANALYSIS]</scope>
    <source>
        <strain>N315</strain>
    </source>
</reference>
<protein>
    <recommendedName>
        <fullName evidence="1">Small ribosomal subunit protein uS8</fullName>
    </recommendedName>
    <alternativeName>
        <fullName evidence="2">30S ribosomal protein S8</fullName>
    </alternativeName>
</protein>
<evidence type="ECO:0000255" key="1">
    <source>
        <dbReference type="HAMAP-Rule" id="MF_01302"/>
    </source>
</evidence>
<evidence type="ECO:0000305" key="2"/>
<proteinExistence type="evidence at protein level"/>
<accession>P66630</accession>
<accession>Q99S35</accession>
<organism>
    <name type="scientific">Staphylococcus aureus (strain N315)</name>
    <dbReference type="NCBI Taxonomy" id="158879"/>
    <lineage>
        <taxon>Bacteria</taxon>
        <taxon>Bacillati</taxon>
        <taxon>Bacillota</taxon>
        <taxon>Bacilli</taxon>
        <taxon>Bacillales</taxon>
        <taxon>Staphylococcaceae</taxon>
        <taxon>Staphylococcus</taxon>
    </lineage>
</organism>
<name>RS8_STAAN</name>